<dbReference type="EMBL" id="U38804">
    <property type="protein sequence ID" value="AAC08244.1"/>
    <property type="molecule type" value="Genomic_DNA"/>
</dbReference>
<dbReference type="PIR" id="S73279">
    <property type="entry name" value="S73279"/>
</dbReference>
<dbReference type="SMR" id="P51358"/>
<dbReference type="GO" id="GO:0009507">
    <property type="term" value="C:chloroplast"/>
    <property type="evidence" value="ECO:0007669"/>
    <property type="project" value="UniProtKB-SubCell"/>
</dbReference>
<dbReference type="GO" id="GO:0005829">
    <property type="term" value="C:cytosol"/>
    <property type="evidence" value="ECO:0007669"/>
    <property type="project" value="TreeGrafter"/>
</dbReference>
<dbReference type="GO" id="GO:0032993">
    <property type="term" value="C:protein-DNA complex"/>
    <property type="evidence" value="ECO:0007669"/>
    <property type="project" value="TreeGrafter"/>
</dbReference>
<dbReference type="GO" id="GO:0000156">
    <property type="term" value="F:phosphorelay response regulator activity"/>
    <property type="evidence" value="ECO:0007669"/>
    <property type="project" value="TreeGrafter"/>
</dbReference>
<dbReference type="GO" id="GO:0000976">
    <property type="term" value="F:transcription cis-regulatory region binding"/>
    <property type="evidence" value="ECO:0007669"/>
    <property type="project" value="TreeGrafter"/>
</dbReference>
<dbReference type="GO" id="GO:0006355">
    <property type="term" value="P:regulation of DNA-templated transcription"/>
    <property type="evidence" value="ECO:0007669"/>
    <property type="project" value="InterPro"/>
</dbReference>
<dbReference type="CDD" id="cd17574">
    <property type="entry name" value="REC_OmpR"/>
    <property type="match status" value="1"/>
</dbReference>
<dbReference type="CDD" id="cd00383">
    <property type="entry name" value="trans_reg_C"/>
    <property type="match status" value="1"/>
</dbReference>
<dbReference type="FunFam" id="3.40.50.2300:FF:000001">
    <property type="entry name" value="DNA-binding response regulator PhoB"/>
    <property type="match status" value="1"/>
</dbReference>
<dbReference type="Gene3D" id="3.40.50.2300">
    <property type="match status" value="1"/>
</dbReference>
<dbReference type="Gene3D" id="6.10.250.690">
    <property type="match status" value="1"/>
</dbReference>
<dbReference type="Gene3D" id="1.10.10.10">
    <property type="entry name" value="Winged helix-like DNA-binding domain superfamily/Winged helix DNA-binding domain"/>
    <property type="match status" value="1"/>
</dbReference>
<dbReference type="InterPro" id="IPR011006">
    <property type="entry name" value="CheY-like_superfamily"/>
</dbReference>
<dbReference type="InterPro" id="IPR001867">
    <property type="entry name" value="OmpR/PhoB-type_DNA-bd"/>
</dbReference>
<dbReference type="InterPro" id="IPR016032">
    <property type="entry name" value="Sig_transdc_resp-reg_C-effctor"/>
</dbReference>
<dbReference type="InterPro" id="IPR001789">
    <property type="entry name" value="Sig_transdc_resp-reg_receiver"/>
</dbReference>
<dbReference type="InterPro" id="IPR039420">
    <property type="entry name" value="WalR-like"/>
</dbReference>
<dbReference type="InterPro" id="IPR036388">
    <property type="entry name" value="WH-like_DNA-bd_sf"/>
</dbReference>
<dbReference type="NCBIfam" id="NF045944">
    <property type="entry name" value="ResRegRpaBCyano"/>
    <property type="match status" value="1"/>
</dbReference>
<dbReference type="PANTHER" id="PTHR48111:SF65">
    <property type="entry name" value="OMPR SUBFAMILY"/>
    <property type="match status" value="1"/>
</dbReference>
<dbReference type="PANTHER" id="PTHR48111">
    <property type="entry name" value="REGULATOR OF RPOS"/>
    <property type="match status" value="1"/>
</dbReference>
<dbReference type="Pfam" id="PF00072">
    <property type="entry name" value="Response_reg"/>
    <property type="match status" value="1"/>
</dbReference>
<dbReference type="Pfam" id="PF00486">
    <property type="entry name" value="Trans_reg_C"/>
    <property type="match status" value="1"/>
</dbReference>
<dbReference type="SMART" id="SM00448">
    <property type="entry name" value="REC"/>
    <property type="match status" value="1"/>
</dbReference>
<dbReference type="SMART" id="SM00862">
    <property type="entry name" value="Trans_reg_C"/>
    <property type="match status" value="1"/>
</dbReference>
<dbReference type="SUPFAM" id="SSF46894">
    <property type="entry name" value="C-terminal effector domain of the bipartite response regulators"/>
    <property type="match status" value="1"/>
</dbReference>
<dbReference type="SUPFAM" id="SSF52172">
    <property type="entry name" value="CheY-like"/>
    <property type="match status" value="1"/>
</dbReference>
<dbReference type="PROSITE" id="PS51755">
    <property type="entry name" value="OMPR_PHOB"/>
    <property type="match status" value="1"/>
</dbReference>
<dbReference type="PROSITE" id="PS50110">
    <property type="entry name" value="RESPONSE_REGULATORY"/>
    <property type="match status" value="1"/>
</dbReference>
<reference key="1">
    <citation type="journal article" date="1995" name="Plant Mol. Biol. Rep.">
        <title>Complete nucleotide sequence of the Porphyra purpurea chloroplast genome.</title>
        <authorList>
            <person name="Reith M.E."/>
            <person name="Munholland J."/>
        </authorList>
    </citation>
    <scope>NUCLEOTIDE SEQUENCE [LARGE SCALE GENOMIC DNA]</scope>
    <source>
        <strain>Avonport</strain>
    </source>
</reference>
<sequence length="243" mass="27532">MENQKEKILVVDDEASIRRILETRLTIIGYEVITASNGEEALIIFRKEYPSLVVLDVMMPKLDGYGVCQELRKESDVPIIMLTALGEVCDRITGLEIGADDYVVKPFSPKELEARIRSVLRRADKITTNLGVPNSGIISIGFLKIDTNKRQVYKNNERVRLTGMEFSLLELLVSKAGEPFSRASILQEVWGYTPERHVDTRVVDVHISRLRAKLEDDPSNPDLILTARGTGYLFQRIIEMNKL</sequence>
<organism>
    <name type="scientific">Porphyra purpurea</name>
    <name type="common">Red seaweed</name>
    <name type="synonym">Ulva purpurea</name>
    <dbReference type="NCBI Taxonomy" id="2787"/>
    <lineage>
        <taxon>Eukaryota</taxon>
        <taxon>Rhodophyta</taxon>
        <taxon>Bangiophyceae</taxon>
        <taxon>Bangiales</taxon>
        <taxon>Bangiaceae</taxon>
        <taxon>Porphyra</taxon>
    </lineage>
</organism>
<proteinExistence type="inferred from homology"/>
<name>YCF27_PORPU</name>
<evidence type="ECO:0000250" key="1"/>
<evidence type="ECO:0000255" key="2">
    <source>
        <dbReference type="PROSITE-ProRule" id="PRU00169"/>
    </source>
</evidence>
<evidence type="ECO:0000255" key="3">
    <source>
        <dbReference type="PROSITE-ProRule" id="PRU01091"/>
    </source>
</evidence>
<accession>P51358</accession>
<comment type="function">
    <text>Probable promoter-specific protein mediating the interaction between DNA and RNA polymerase.</text>
</comment>
<comment type="subcellular location">
    <subcellularLocation>
        <location>Plastid</location>
        <location>Chloroplast</location>
    </subcellularLocation>
</comment>
<protein>
    <recommendedName>
        <fullName>Probable transcriptional regulator ycf27</fullName>
    </recommendedName>
    <alternativeName>
        <fullName>OmpR-like protein</fullName>
    </alternativeName>
</protein>
<feature type="chain" id="PRO_0000081353" description="Probable transcriptional regulator ycf27">
    <location>
        <begin position="1"/>
        <end position="243"/>
    </location>
</feature>
<feature type="domain" description="Response regulatory" evidence="2">
    <location>
        <begin position="7"/>
        <end position="120"/>
    </location>
</feature>
<feature type="DNA-binding region" description="H-T-H motif" evidence="1">
    <location>
        <begin position="76"/>
        <end position="94"/>
    </location>
</feature>
<feature type="DNA-binding region" description="OmpR/PhoB-type" evidence="3">
    <location>
        <begin position="135"/>
        <end position="236"/>
    </location>
</feature>
<feature type="modified residue" description="4-aspartylphosphate" evidence="2">
    <location>
        <position position="56"/>
    </location>
</feature>
<keyword id="KW-0150">Chloroplast</keyword>
<keyword id="KW-0238">DNA-binding</keyword>
<keyword id="KW-0597">Phosphoprotein</keyword>
<keyword id="KW-0934">Plastid</keyword>
<keyword id="KW-0804">Transcription</keyword>
<keyword id="KW-0805">Transcription regulation</keyword>
<keyword id="KW-0902">Two-component regulatory system</keyword>
<geneLocation type="chloroplast"/>
<gene>
    <name type="primary">ycf27</name>
</gene>